<name>RL32_CHLCV</name>
<organism>
    <name type="scientific">Chlamydia caviae (strain ATCC VR-813 / DSM 19441 / 03DC25 / GPIC)</name>
    <name type="common">Chlamydophila caviae</name>
    <dbReference type="NCBI Taxonomy" id="227941"/>
    <lineage>
        <taxon>Bacteria</taxon>
        <taxon>Pseudomonadati</taxon>
        <taxon>Chlamydiota</taxon>
        <taxon>Chlamydiia</taxon>
        <taxon>Chlamydiales</taxon>
        <taxon>Chlamydiaceae</taxon>
        <taxon>Chlamydia/Chlamydophila group</taxon>
        <taxon>Chlamydia</taxon>
    </lineage>
</organism>
<sequence length="60" mass="6790">MAVPRNRHSNARKNIRRSHHAKKARHAAVCNNCKQAFIPHTICTSCGFYNGKAVMTVEKK</sequence>
<gene>
    <name evidence="2" type="primary">rpmF</name>
    <name type="ordered locus">CCA_00808</name>
</gene>
<feature type="initiator methionine" description="Removed" evidence="1">
    <location>
        <position position="1"/>
    </location>
</feature>
<feature type="chain" id="PRO_0000172325" description="Large ribosomal subunit protein bL32">
    <location>
        <begin position="2"/>
        <end position="60"/>
    </location>
</feature>
<feature type="region of interest" description="Disordered" evidence="3">
    <location>
        <begin position="1"/>
        <end position="23"/>
    </location>
</feature>
<evidence type="ECO:0000250" key="1"/>
<evidence type="ECO:0000255" key="2">
    <source>
        <dbReference type="HAMAP-Rule" id="MF_00340"/>
    </source>
</evidence>
<evidence type="ECO:0000256" key="3">
    <source>
        <dbReference type="SAM" id="MobiDB-lite"/>
    </source>
</evidence>
<evidence type="ECO:0000305" key="4"/>
<dbReference type="EMBL" id="AE015925">
    <property type="protein sequence ID" value="AAP05549.1"/>
    <property type="molecule type" value="Genomic_DNA"/>
</dbReference>
<dbReference type="RefSeq" id="WP_011006763.1">
    <property type="nucleotide sequence ID" value="NC_003361.3"/>
</dbReference>
<dbReference type="SMR" id="Q821X7"/>
<dbReference type="STRING" id="227941.CCA_00808"/>
<dbReference type="KEGG" id="cca:CCA_00808"/>
<dbReference type="eggNOG" id="COG0333">
    <property type="taxonomic scope" value="Bacteria"/>
</dbReference>
<dbReference type="HOGENOM" id="CLU_129084_1_3_0"/>
<dbReference type="OrthoDB" id="9812874at2"/>
<dbReference type="Proteomes" id="UP000002193">
    <property type="component" value="Chromosome"/>
</dbReference>
<dbReference type="GO" id="GO:0015934">
    <property type="term" value="C:large ribosomal subunit"/>
    <property type="evidence" value="ECO:0007669"/>
    <property type="project" value="InterPro"/>
</dbReference>
<dbReference type="GO" id="GO:0003735">
    <property type="term" value="F:structural constituent of ribosome"/>
    <property type="evidence" value="ECO:0007669"/>
    <property type="project" value="InterPro"/>
</dbReference>
<dbReference type="GO" id="GO:0006412">
    <property type="term" value="P:translation"/>
    <property type="evidence" value="ECO:0007669"/>
    <property type="project" value="UniProtKB-UniRule"/>
</dbReference>
<dbReference type="HAMAP" id="MF_00340">
    <property type="entry name" value="Ribosomal_bL32"/>
    <property type="match status" value="1"/>
</dbReference>
<dbReference type="InterPro" id="IPR002677">
    <property type="entry name" value="Ribosomal_bL32"/>
</dbReference>
<dbReference type="InterPro" id="IPR044957">
    <property type="entry name" value="Ribosomal_bL32_bact"/>
</dbReference>
<dbReference type="InterPro" id="IPR011332">
    <property type="entry name" value="Ribosomal_zn-bd"/>
</dbReference>
<dbReference type="NCBIfam" id="TIGR01031">
    <property type="entry name" value="rpmF_bact"/>
    <property type="match status" value="1"/>
</dbReference>
<dbReference type="PANTHER" id="PTHR35534">
    <property type="entry name" value="50S RIBOSOMAL PROTEIN L32"/>
    <property type="match status" value="1"/>
</dbReference>
<dbReference type="PANTHER" id="PTHR35534:SF1">
    <property type="entry name" value="LARGE RIBOSOMAL SUBUNIT PROTEIN BL32"/>
    <property type="match status" value="1"/>
</dbReference>
<dbReference type="Pfam" id="PF01783">
    <property type="entry name" value="Ribosomal_L32p"/>
    <property type="match status" value="1"/>
</dbReference>
<dbReference type="SUPFAM" id="SSF57829">
    <property type="entry name" value="Zn-binding ribosomal proteins"/>
    <property type="match status" value="1"/>
</dbReference>
<proteinExistence type="inferred from homology"/>
<accession>Q821X7</accession>
<keyword id="KW-0687">Ribonucleoprotein</keyword>
<keyword id="KW-0689">Ribosomal protein</keyword>
<protein>
    <recommendedName>
        <fullName evidence="2">Large ribosomal subunit protein bL32</fullName>
    </recommendedName>
    <alternativeName>
        <fullName evidence="4">50S ribosomal protein L32</fullName>
    </alternativeName>
</protein>
<comment type="similarity">
    <text evidence="2">Belongs to the bacterial ribosomal protein bL32 family.</text>
</comment>
<reference key="1">
    <citation type="journal article" date="2003" name="Nucleic Acids Res.">
        <title>Genome sequence of Chlamydophila caviae (Chlamydia psittaci GPIC): examining the role of niche-specific genes in the evolution of the Chlamydiaceae.</title>
        <authorList>
            <person name="Read T.D."/>
            <person name="Myers G.S.A."/>
            <person name="Brunham R.C."/>
            <person name="Nelson W.C."/>
            <person name="Paulsen I.T."/>
            <person name="Heidelberg J.F."/>
            <person name="Holtzapple E.K."/>
            <person name="Khouri H.M."/>
            <person name="Federova N.B."/>
            <person name="Carty H.A."/>
            <person name="Umayam L.A."/>
            <person name="Haft D.H."/>
            <person name="Peterson J.D."/>
            <person name="Beanan M.J."/>
            <person name="White O."/>
            <person name="Salzberg S.L."/>
            <person name="Hsia R.-C."/>
            <person name="McClarty G."/>
            <person name="Rank R.G."/>
            <person name="Bavoil P.M."/>
            <person name="Fraser C.M."/>
        </authorList>
    </citation>
    <scope>NUCLEOTIDE SEQUENCE [LARGE SCALE GENOMIC DNA]</scope>
    <source>
        <strain>ATCC VR-813 / DSM 19441 / 03DC25 / GPIC</strain>
    </source>
</reference>